<reference key="1">
    <citation type="submission" date="2005-06" db="EMBL/GenBank/DDBJ databases">
        <title>DNA sequences of macaque genes expressed in brain or testis and its evolutionary implications.</title>
        <authorList>
            <consortium name="International consortium for macaque cDNA sequencing and analysis"/>
        </authorList>
    </citation>
    <scope>NUCLEOTIDE SEQUENCE [LARGE SCALE MRNA]</scope>
    <source>
        <tissue>Testis</tissue>
    </source>
</reference>
<proteinExistence type="evidence at transcript level"/>
<organism>
    <name type="scientific">Macaca fascicularis</name>
    <name type="common">Crab-eating macaque</name>
    <name type="synonym">Cynomolgus monkey</name>
    <dbReference type="NCBI Taxonomy" id="9541"/>
    <lineage>
        <taxon>Eukaryota</taxon>
        <taxon>Metazoa</taxon>
        <taxon>Chordata</taxon>
        <taxon>Craniata</taxon>
        <taxon>Vertebrata</taxon>
        <taxon>Euteleostomi</taxon>
        <taxon>Mammalia</taxon>
        <taxon>Eutheria</taxon>
        <taxon>Euarchontoglires</taxon>
        <taxon>Primates</taxon>
        <taxon>Haplorrhini</taxon>
        <taxon>Catarrhini</taxon>
        <taxon>Cercopithecidae</taxon>
        <taxon>Cercopithecinae</taxon>
        <taxon>Macaca</taxon>
    </lineage>
</organism>
<dbReference type="EMBL" id="AB169148">
    <property type="protein sequence ID" value="BAE01241.1"/>
    <property type="molecule type" value="mRNA"/>
</dbReference>
<dbReference type="RefSeq" id="NP_001270221.1">
    <property type="nucleotide sequence ID" value="NM_001283292.1"/>
</dbReference>
<dbReference type="STRING" id="9541.ENSMFAP00000025937"/>
<dbReference type="Ensembl" id="ENSMFAT00000034092.2">
    <property type="protein sequence ID" value="ENSMFAP00000025937.2"/>
    <property type="gene ID" value="ENSMFAG00000044441.2"/>
</dbReference>
<dbReference type="eggNOG" id="ENOG502TDNH">
    <property type="taxonomic scope" value="Eukaryota"/>
</dbReference>
<dbReference type="GeneTree" id="ENSGT00390000003732"/>
<dbReference type="Proteomes" id="UP000233100">
    <property type="component" value="Chromosome X"/>
</dbReference>
<dbReference type="Bgee" id="ENSMFAG00000044441">
    <property type="expression patterns" value="Expressed in multicellular organism"/>
</dbReference>
<dbReference type="InterPro" id="IPR013087">
    <property type="entry name" value="Znf_C2H2_type"/>
</dbReference>
<dbReference type="PROSITE" id="PS50157">
    <property type="entry name" value="ZINC_FINGER_C2H2_2"/>
    <property type="match status" value="1"/>
</dbReference>
<sequence length="321" mass="37453">MSSPTKEGSDTAGNAHKNSENEPSNDCTTDIESPSADPNMIYQVETNSINREPGTATSQEDAVPQAAANTELETEIQKDQREEDIKEEPLLLQIPIPRKLISLMSELGRGNYLRILLVKIDQNKPLNDRSKSHSEKAEMKANNCPVNRKIRFRLSTSWRVPFINNHEIRSMILRLLCERYFSQAEECQDTMWVKQNYIACLYRPNSFTHHERTVIFRRPLRVRYHRPLTERMTSGKFCKSTDMKGKYRFRAIVRSVLFVSHVQLQSLFNRKGFVDILRYNHTRKVMIISTNNGWKYFCPICGRLFNTYFELRRHSCRSPGN</sequence>
<gene>
    <name type="primary">CPXCR1</name>
    <name type="ORF">QtsA-17554</name>
</gene>
<evidence type="ECO:0000256" key="1">
    <source>
        <dbReference type="SAM" id="MobiDB-lite"/>
    </source>
</evidence>
<accession>Q4R6N4</accession>
<keyword id="KW-1185">Reference proteome</keyword>
<feature type="chain" id="PRO_0000305344" description="CPX chromosomal region candidate gene 1 protein homolog">
    <location>
        <begin position="1"/>
        <end position="321"/>
    </location>
</feature>
<feature type="region of interest" description="Disordered" evidence="1">
    <location>
        <begin position="1"/>
        <end position="83"/>
    </location>
</feature>
<feature type="compositionally biased region" description="Polar residues" evidence="1">
    <location>
        <begin position="21"/>
        <end position="32"/>
    </location>
</feature>
<feature type="compositionally biased region" description="Polar residues" evidence="1">
    <location>
        <begin position="44"/>
        <end position="60"/>
    </location>
</feature>
<protein>
    <recommendedName>
        <fullName>CPX chromosomal region candidate gene 1 protein homolog</fullName>
    </recommendedName>
</protein>
<name>CPXCR_MACFA</name>